<reference key="1">
    <citation type="journal article" date="2005" name="Proc. Natl. Acad. Sci. U.S.A.">
        <title>Complete genome sequencing of Anaplasma marginale reveals that the surface is skewed to two superfamilies of outer membrane proteins.</title>
        <authorList>
            <person name="Brayton K.A."/>
            <person name="Kappmeyer L.S."/>
            <person name="Herndon D.R."/>
            <person name="Dark M.J."/>
            <person name="Tibbals D.L."/>
            <person name="Palmer G.H."/>
            <person name="McGuire T.C."/>
            <person name="Knowles D.P. Jr."/>
        </authorList>
    </citation>
    <scope>NUCLEOTIDE SEQUENCE [LARGE SCALE GENOMIC DNA]</scope>
    <source>
        <strain>St. Maries</strain>
    </source>
</reference>
<protein>
    <recommendedName>
        <fullName evidence="1">tRNA modification GTPase MnmE</fullName>
        <ecNumber evidence="1">3.6.-.-</ecNumber>
    </recommendedName>
</protein>
<keyword id="KW-0963">Cytoplasm</keyword>
<keyword id="KW-0342">GTP-binding</keyword>
<keyword id="KW-0378">Hydrolase</keyword>
<keyword id="KW-0460">Magnesium</keyword>
<keyword id="KW-0479">Metal-binding</keyword>
<keyword id="KW-0547">Nucleotide-binding</keyword>
<keyword id="KW-0630">Potassium</keyword>
<keyword id="KW-0819">tRNA processing</keyword>
<proteinExistence type="inferred from homology"/>
<organism>
    <name type="scientific">Anaplasma marginale (strain St. Maries)</name>
    <dbReference type="NCBI Taxonomy" id="234826"/>
    <lineage>
        <taxon>Bacteria</taxon>
        <taxon>Pseudomonadati</taxon>
        <taxon>Pseudomonadota</taxon>
        <taxon>Alphaproteobacteria</taxon>
        <taxon>Rickettsiales</taxon>
        <taxon>Anaplasmataceae</taxon>
        <taxon>Anaplasma</taxon>
    </lineage>
</organism>
<gene>
    <name evidence="1" type="primary">mnmE</name>
    <name evidence="1" type="synonym">trmE</name>
    <name type="ordered locus">AM1332</name>
</gene>
<sequence length="443" mass="48884">MSRADTIFALSTPMGKSGVAVIRVSGHDALKSMQLLGVKEPVRSRVATCKTLYDKKRQPIDQAVVLYFPGPGSFTGEDVVELQVHGSLAVIRLLFEELQTVFRIAEPGEFSLRAFLNGKIDLTRAEGIADLVNSETEAQLRQAFAQSSGFLERLYEEWRSSLVDILSDLEAYIDFPDDVSPQILRSVHDRVKELHNSLERHLDDGHRGERLRHGMRVAILGKPNVGKSTLFNHLARRDMAIVSEYPGTTRDVLEAHVDIGGYPFIVVDTAGIRESTDFVEREGIMRAKSEAATADIRIMLFPHSEAGNLGVHEAIEGGDDGKTIYVLSKADSAKEGETRIIEGKQFYLVSVHTNLGVDSLLSALKERAIDGFPKSGDVLITSQRHRGHLQSAAKVISDITDEMPAEIVAEYLRLATKEIGKVTGAVYGDDILDNIFKRFCIGK</sequence>
<comment type="function">
    <text evidence="1">Exhibits a very high intrinsic GTPase hydrolysis rate. Involved in the addition of a carboxymethylaminomethyl (cmnm) group at the wobble position (U34) of certain tRNAs, forming tRNA-cmnm(5)s(2)U34.</text>
</comment>
<comment type="cofactor">
    <cofactor evidence="1">
        <name>K(+)</name>
        <dbReference type="ChEBI" id="CHEBI:29103"/>
    </cofactor>
    <text evidence="1">Binds 1 potassium ion per subunit.</text>
</comment>
<comment type="subunit">
    <text evidence="1">Homodimer. Heterotetramer of two MnmE and two MnmG subunits.</text>
</comment>
<comment type="subcellular location">
    <subcellularLocation>
        <location evidence="1">Cytoplasm</location>
    </subcellularLocation>
</comment>
<comment type="similarity">
    <text evidence="1">Belongs to the TRAFAC class TrmE-Era-EngA-EngB-Septin-like GTPase superfamily. TrmE GTPase family.</text>
</comment>
<dbReference type="EC" id="3.6.-.-" evidence="1"/>
<dbReference type="EMBL" id="CP000030">
    <property type="protein sequence ID" value="AAV87119.1"/>
    <property type="molecule type" value="Genomic_DNA"/>
</dbReference>
<dbReference type="SMR" id="Q5P9B1"/>
<dbReference type="KEGG" id="ama:AM1332"/>
<dbReference type="HOGENOM" id="CLU_019624_3_1_5"/>
<dbReference type="GO" id="GO:0005737">
    <property type="term" value="C:cytoplasm"/>
    <property type="evidence" value="ECO:0007669"/>
    <property type="project" value="UniProtKB-SubCell"/>
</dbReference>
<dbReference type="GO" id="GO:0005525">
    <property type="term" value="F:GTP binding"/>
    <property type="evidence" value="ECO:0007669"/>
    <property type="project" value="UniProtKB-UniRule"/>
</dbReference>
<dbReference type="GO" id="GO:0003924">
    <property type="term" value="F:GTPase activity"/>
    <property type="evidence" value="ECO:0007669"/>
    <property type="project" value="UniProtKB-UniRule"/>
</dbReference>
<dbReference type="GO" id="GO:0046872">
    <property type="term" value="F:metal ion binding"/>
    <property type="evidence" value="ECO:0007669"/>
    <property type="project" value="UniProtKB-KW"/>
</dbReference>
<dbReference type="GO" id="GO:0030488">
    <property type="term" value="P:tRNA methylation"/>
    <property type="evidence" value="ECO:0007669"/>
    <property type="project" value="TreeGrafter"/>
</dbReference>
<dbReference type="GO" id="GO:0002098">
    <property type="term" value="P:tRNA wobble uridine modification"/>
    <property type="evidence" value="ECO:0007669"/>
    <property type="project" value="TreeGrafter"/>
</dbReference>
<dbReference type="CDD" id="cd04164">
    <property type="entry name" value="trmE"/>
    <property type="match status" value="1"/>
</dbReference>
<dbReference type="CDD" id="cd14858">
    <property type="entry name" value="TrmE_N"/>
    <property type="match status" value="1"/>
</dbReference>
<dbReference type="FunFam" id="3.30.1360.120:FF:000007">
    <property type="entry name" value="tRNA modification GTPase GTPBP3, mitochondrial"/>
    <property type="match status" value="1"/>
</dbReference>
<dbReference type="Gene3D" id="3.40.50.300">
    <property type="entry name" value="P-loop containing nucleotide triphosphate hydrolases"/>
    <property type="match status" value="1"/>
</dbReference>
<dbReference type="Gene3D" id="3.30.1360.120">
    <property type="entry name" value="Probable tRNA modification gtpase trme, domain 1"/>
    <property type="match status" value="1"/>
</dbReference>
<dbReference type="Gene3D" id="1.20.120.430">
    <property type="entry name" value="tRNA modification GTPase MnmE domain 2"/>
    <property type="match status" value="1"/>
</dbReference>
<dbReference type="HAMAP" id="MF_00379">
    <property type="entry name" value="GTPase_MnmE"/>
    <property type="match status" value="1"/>
</dbReference>
<dbReference type="InterPro" id="IPR031168">
    <property type="entry name" value="G_TrmE"/>
</dbReference>
<dbReference type="InterPro" id="IPR006073">
    <property type="entry name" value="GTP-bd"/>
</dbReference>
<dbReference type="InterPro" id="IPR018948">
    <property type="entry name" value="GTP-bd_TrmE_N"/>
</dbReference>
<dbReference type="InterPro" id="IPR004520">
    <property type="entry name" value="GTPase_MnmE"/>
</dbReference>
<dbReference type="InterPro" id="IPR027368">
    <property type="entry name" value="MnmE_dom2"/>
</dbReference>
<dbReference type="InterPro" id="IPR025867">
    <property type="entry name" value="MnmE_helical"/>
</dbReference>
<dbReference type="InterPro" id="IPR027417">
    <property type="entry name" value="P-loop_NTPase"/>
</dbReference>
<dbReference type="InterPro" id="IPR005225">
    <property type="entry name" value="Small_GTP-bd"/>
</dbReference>
<dbReference type="InterPro" id="IPR027266">
    <property type="entry name" value="TrmE/GcvT_dom1"/>
</dbReference>
<dbReference type="NCBIfam" id="TIGR00450">
    <property type="entry name" value="mnmE_trmE_thdF"/>
    <property type="match status" value="1"/>
</dbReference>
<dbReference type="NCBIfam" id="NF003661">
    <property type="entry name" value="PRK05291.1-3"/>
    <property type="match status" value="1"/>
</dbReference>
<dbReference type="NCBIfam" id="TIGR00231">
    <property type="entry name" value="small_GTP"/>
    <property type="match status" value="1"/>
</dbReference>
<dbReference type="PANTHER" id="PTHR42714">
    <property type="entry name" value="TRNA MODIFICATION GTPASE GTPBP3"/>
    <property type="match status" value="1"/>
</dbReference>
<dbReference type="PANTHER" id="PTHR42714:SF2">
    <property type="entry name" value="TRNA MODIFICATION GTPASE GTPBP3, MITOCHONDRIAL"/>
    <property type="match status" value="1"/>
</dbReference>
<dbReference type="Pfam" id="PF01926">
    <property type="entry name" value="MMR_HSR1"/>
    <property type="match status" value="1"/>
</dbReference>
<dbReference type="Pfam" id="PF12631">
    <property type="entry name" value="MnmE_helical"/>
    <property type="match status" value="1"/>
</dbReference>
<dbReference type="Pfam" id="PF10396">
    <property type="entry name" value="TrmE_N"/>
    <property type="match status" value="1"/>
</dbReference>
<dbReference type="SUPFAM" id="SSF52540">
    <property type="entry name" value="P-loop containing nucleoside triphosphate hydrolases"/>
    <property type="match status" value="1"/>
</dbReference>
<dbReference type="SUPFAM" id="SSF116878">
    <property type="entry name" value="TrmE connector domain"/>
    <property type="match status" value="1"/>
</dbReference>
<dbReference type="PROSITE" id="PS51709">
    <property type="entry name" value="G_TRME"/>
    <property type="match status" value="1"/>
</dbReference>
<name>MNME_ANAMM</name>
<accession>Q5P9B1</accession>
<evidence type="ECO:0000255" key="1">
    <source>
        <dbReference type="HAMAP-Rule" id="MF_00379"/>
    </source>
</evidence>
<feature type="chain" id="PRO_0000345705" description="tRNA modification GTPase MnmE">
    <location>
        <begin position="1"/>
        <end position="443"/>
    </location>
</feature>
<feature type="domain" description="TrmE-type G">
    <location>
        <begin position="214"/>
        <end position="369"/>
    </location>
</feature>
<feature type="binding site" evidence="1">
    <location>
        <position position="23"/>
    </location>
    <ligand>
        <name>(6S)-5-formyl-5,6,7,8-tetrahydrofolate</name>
        <dbReference type="ChEBI" id="CHEBI:57457"/>
    </ligand>
</feature>
<feature type="binding site" evidence="1">
    <location>
        <position position="81"/>
    </location>
    <ligand>
        <name>(6S)-5-formyl-5,6,7,8-tetrahydrofolate</name>
        <dbReference type="ChEBI" id="CHEBI:57457"/>
    </ligand>
</feature>
<feature type="binding site" evidence="1">
    <location>
        <position position="119"/>
    </location>
    <ligand>
        <name>(6S)-5-formyl-5,6,7,8-tetrahydrofolate</name>
        <dbReference type="ChEBI" id="CHEBI:57457"/>
    </ligand>
</feature>
<feature type="binding site" evidence="1">
    <location>
        <begin position="224"/>
        <end position="229"/>
    </location>
    <ligand>
        <name>GTP</name>
        <dbReference type="ChEBI" id="CHEBI:37565"/>
    </ligand>
</feature>
<feature type="binding site" evidence="1">
    <location>
        <position position="228"/>
    </location>
    <ligand>
        <name>Mg(2+)</name>
        <dbReference type="ChEBI" id="CHEBI:18420"/>
    </ligand>
</feature>
<feature type="binding site" evidence="1">
    <location>
        <begin position="243"/>
        <end position="249"/>
    </location>
    <ligand>
        <name>GTP</name>
        <dbReference type="ChEBI" id="CHEBI:37565"/>
    </ligand>
</feature>
<feature type="binding site" evidence="1">
    <location>
        <position position="249"/>
    </location>
    <ligand>
        <name>Mg(2+)</name>
        <dbReference type="ChEBI" id="CHEBI:18420"/>
    </ligand>
</feature>
<feature type="binding site" evidence="1">
    <location>
        <begin position="268"/>
        <end position="271"/>
    </location>
    <ligand>
        <name>GTP</name>
        <dbReference type="ChEBI" id="CHEBI:37565"/>
    </ligand>
</feature>
<feature type="binding site" evidence="1">
    <location>
        <position position="443"/>
    </location>
    <ligand>
        <name>(6S)-5-formyl-5,6,7,8-tetrahydrofolate</name>
        <dbReference type="ChEBI" id="CHEBI:57457"/>
    </ligand>
</feature>